<comment type="function">
    <text evidence="1">Probably a ribosomal protein or a ribosome-associated protein.</text>
</comment>
<comment type="subunit">
    <text evidence="1">Part of the 30S ribosomal subunit.</text>
</comment>
<comment type="similarity">
    <text evidence="1">Belongs to the chloroplast-specific ribosomal protein cS23 family.</text>
</comment>
<protein>
    <recommendedName>
        <fullName evidence="1">Probable small ribosomal subunit protein cS23</fullName>
    </recommendedName>
    <alternativeName>
        <fullName>Probable 30S ribosomal protein PSRP-3</fullName>
    </alternativeName>
    <alternativeName>
        <fullName>Ycf65-like protein</fullName>
    </alternativeName>
</protein>
<feature type="chain" id="PRO_1000051528" description="Probable small ribosomal subunit protein cS23">
    <location>
        <begin position="1"/>
        <end position="112"/>
    </location>
</feature>
<proteinExistence type="inferred from homology"/>
<evidence type="ECO:0000255" key="1">
    <source>
        <dbReference type="HAMAP-Rule" id="MF_00619"/>
    </source>
</evidence>
<dbReference type="EMBL" id="AP008231">
    <property type="protein sequence ID" value="BAD79948.1"/>
    <property type="molecule type" value="Genomic_DNA"/>
</dbReference>
<dbReference type="RefSeq" id="WP_011244068.1">
    <property type="nucleotide sequence ID" value="NZ_CP085785.1"/>
</dbReference>
<dbReference type="SMR" id="Q5N172"/>
<dbReference type="KEGG" id="syc:syc1758_d"/>
<dbReference type="eggNOG" id="ENOG503137T">
    <property type="taxonomic scope" value="Bacteria"/>
</dbReference>
<dbReference type="Proteomes" id="UP000001175">
    <property type="component" value="Chromosome"/>
</dbReference>
<dbReference type="GO" id="GO:1990904">
    <property type="term" value="C:ribonucleoprotein complex"/>
    <property type="evidence" value="ECO:0007669"/>
    <property type="project" value="UniProtKB-KW"/>
</dbReference>
<dbReference type="GO" id="GO:0005840">
    <property type="term" value="C:ribosome"/>
    <property type="evidence" value="ECO:0007669"/>
    <property type="project" value="UniProtKB-KW"/>
</dbReference>
<dbReference type="GO" id="GO:0003735">
    <property type="term" value="F:structural constituent of ribosome"/>
    <property type="evidence" value="ECO:0007669"/>
    <property type="project" value="InterPro"/>
</dbReference>
<dbReference type="GO" id="GO:0006412">
    <property type="term" value="P:translation"/>
    <property type="evidence" value="ECO:0007669"/>
    <property type="project" value="UniProtKB-UniRule"/>
</dbReference>
<dbReference type="Gene3D" id="3.30.390.140">
    <property type="match status" value="1"/>
</dbReference>
<dbReference type="HAMAP" id="MF_00619">
    <property type="entry name" value="Ribosomal_plastid_cS23"/>
    <property type="match status" value="1"/>
</dbReference>
<dbReference type="InterPro" id="IPR038447">
    <property type="entry name" value="PSRP-3/Ycf65_sf"/>
</dbReference>
<dbReference type="InterPro" id="IPR006924">
    <property type="entry name" value="Ribosomal_PSRP3/Ycf65"/>
</dbReference>
<dbReference type="NCBIfam" id="NF002740">
    <property type="entry name" value="PRK02724.1"/>
    <property type="match status" value="1"/>
</dbReference>
<dbReference type="PANTHER" id="PTHR35108">
    <property type="entry name" value="30S RIBOSOMAL PROTEIN 3, CHLOROPLASTIC"/>
    <property type="match status" value="1"/>
</dbReference>
<dbReference type="PANTHER" id="PTHR35108:SF1">
    <property type="entry name" value="OS04G0461100 PROTEIN"/>
    <property type="match status" value="1"/>
</dbReference>
<dbReference type="Pfam" id="PF04839">
    <property type="entry name" value="PSRP-3_Ycf65"/>
    <property type="match status" value="1"/>
</dbReference>
<sequence>MIGTSAKHGWEVGLSRFTIKILWLNENVAIAVDQVVGKATSPLTAYYFWPRHDAWEQLKTELESKSWITEAERVELLNQATEVINYWQEEGKGKPLAQAQARFPELVFTGSN</sequence>
<accession>Q5N172</accession>
<gene>
    <name type="ordered locus">syc1758_d</name>
</gene>
<organism>
    <name type="scientific">Synechococcus sp. (strain ATCC 27144 / PCC 6301 / SAUG 1402/1)</name>
    <name type="common">Anacystis nidulans</name>
    <dbReference type="NCBI Taxonomy" id="269084"/>
    <lineage>
        <taxon>Bacteria</taxon>
        <taxon>Bacillati</taxon>
        <taxon>Cyanobacteriota</taxon>
        <taxon>Cyanophyceae</taxon>
        <taxon>Synechococcales</taxon>
        <taxon>Synechococcaceae</taxon>
        <taxon>Synechococcus</taxon>
    </lineage>
</organism>
<reference key="1">
    <citation type="journal article" date="2007" name="Photosyn. Res.">
        <title>Complete nucleotide sequence of the freshwater unicellular cyanobacterium Synechococcus elongatus PCC 6301 chromosome: gene content and organization.</title>
        <authorList>
            <person name="Sugita C."/>
            <person name="Ogata K."/>
            <person name="Shikata M."/>
            <person name="Jikuya H."/>
            <person name="Takano J."/>
            <person name="Furumichi M."/>
            <person name="Kanehisa M."/>
            <person name="Omata T."/>
            <person name="Sugiura M."/>
            <person name="Sugita M."/>
        </authorList>
    </citation>
    <scope>NUCLEOTIDE SEQUENCE [LARGE SCALE GENOMIC DNA]</scope>
    <source>
        <strain>ATCC 27144 / PCC 6301 / SAUG 1402/1</strain>
    </source>
</reference>
<name>RRP3_SYNP6</name>
<keyword id="KW-0687">Ribonucleoprotein</keyword>
<keyword id="KW-0689">Ribosomal protein</keyword>